<feature type="peptide" id="PRO_0000421559" description="Extended FMRFamide-12" evidence="3">
    <location>
        <begin position="1"/>
        <end position="15"/>
    </location>
</feature>
<feature type="modified residue" description="Leucine amide" evidence="3">
    <location>
        <position position="15"/>
    </location>
</feature>
<feature type="unsure residue" description="L or I" evidence="3">
    <location>
        <position position="13"/>
    </location>
</feature>
<feature type="unsure residue" description="L or I" evidence="3">
    <location>
        <position position="15"/>
    </location>
</feature>
<dbReference type="GO" id="GO:0005576">
    <property type="term" value="C:extracellular region"/>
    <property type="evidence" value="ECO:0007669"/>
    <property type="project" value="UniProtKB-SubCell"/>
</dbReference>
<dbReference type="GO" id="GO:0007218">
    <property type="term" value="P:neuropeptide signaling pathway"/>
    <property type="evidence" value="ECO:0007669"/>
    <property type="project" value="UniProtKB-KW"/>
</dbReference>
<reference evidence="5" key="1">
    <citation type="journal article" date="2012" name="Syst. Biol.">
        <title>Peptidomics-based phylogeny and biogeography of Mantophasmatodea (Hexapoda).</title>
        <authorList>
            <person name="Predel R."/>
            <person name="Neupert S."/>
            <person name="Huetteroth W."/>
            <person name="Kahnt J."/>
            <person name="Waidelich D."/>
            <person name="Roth S."/>
        </authorList>
    </citation>
    <scope>PROTEIN SEQUENCE</scope>
    <scope>AMIDATION AT LEU-15</scope>
    <source>
        <tissue evidence="3">Thoracic perisympathetic organs</tissue>
    </source>
</reference>
<proteinExistence type="evidence at protein level"/>
<evidence type="ECO:0000250" key="1">
    <source>
        <dbReference type="UniProtKB" id="P34405"/>
    </source>
</evidence>
<evidence type="ECO:0000255" key="2"/>
<evidence type="ECO:0000269" key="3">
    <source>
    </source>
</evidence>
<evidence type="ECO:0000303" key="4">
    <source>
    </source>
</evidence>
<evidence type="ECO:0000305" key="5"/>
<evidence type="ECO:0000305" key="6">
    <source>
    </source>
</evidence>
<sequence>SPAFDDEHNDNFLRL</sequence>
<accession>B3A090</accession>
<protein>
    <recommendedName>
        <fullName evidence="4">Extended FMRFamide-12</fullName>
        <shortName evidence="4">FMRFa-12</shortName>
    </recommendedName>
</protein>
<name>FAR12_LOBRE</name>
<comment type="function">
    <text evidence="1">FMRFamides and FMRFamide-like peptides are neuropeptides.</text>
</comment>
<comment type="subcellular location">
    <subcellularLocation>
        <location evidence="6">Secreted</location>
    </subcellularLocation>
</comment>
<comment type="similarity">
    <text evidence="2">Belongs to the FARP (FMRF amide related peptide) family.</text>
</comment>
<organism>
    <name type="scientific">Lobatophasma redelinghuysense</name>
    <name type="common">Gladiator</name>
    <name type="synonym">Heel-walker</name>
    <dbReference type="NCBI Taxonomy" id="253128"/>
    <lineage>
        <taxon>Eukaryota</taxon>
        <taxon>Metazoa</taxon>
        <taxon>Ecdysozoa</taxon>
        <taxon>Arthropoda</taxon>
        <taxon>Hexapoda</taxon>
        <taxon>Insecta</taxon>
        <taxon>Pterygota</taxon>
        <taxon>Neoptera</taxon>
        <taxon>Polyneoptera</taxon>
        <taxon>Mantophasmatodea</taxon>
        <taxon>Austrophasmatidae</taxon>
        <taxon>Lobatophasma</taxon>
    </lineage>
</organism>
<keyword id="KW-0027">Amidation</keyword>
<keyword id="KW-0903">Direct protein sequencing</keyword>
<keyword id="KW-0527">Neuropeptide</keyword>
<keyword id="KW-0964">Secreted</keyword>